<feature type="chain" id="PRO_0000325991" description="Photosystem I assembly protein Ycf4">
    <location>
        <begin position="1"/>
        <end position="184"/>
    </location>
</feature>
<feature type="transmembrane region" description="Helical" evidence="1">
    <location>
        <begin position="22"/>
        <end position="42"/>
    </location>
</feature>
<feature type="transmembrane region" description="Helical" evidence="1">
    <location>
        <begin position="57"/>
        <end position="77"/>
    </location>
</feature>
<sequence>MNWRSEHIWIEFITGSRKTSNFGWACILFLGSLGFLVVGASSYLGRNLISVFPSQQIVFFPQGIVMSFYGIAGLFISSYLWCTISWNVGSGYDRFDRKEGIVCIFRWGFPGINRRIFLRFFIRDIQSIRIEVKEGLYSRRVLYMEIRGQGAIPLTRTDENLTPREIEQKAADSAYFLRVPIEVF</sequence>
<dbReference type="EMBL" id="AJ879453">
    <property type="protein sequence ID" value="CAI53804.1"/>
    <property type="molecule type" value="Genomic_DNA"/>
</dbReference>
<dbReference type="RefSeq" id="YP_319775.1">
    <property type="nucleotide sequence ID" value="NC_007407.1"/>
</dbReference>
<dbReference type="GeneID" id="3677399"/>
<dbReference type="GO" id="GO:0009535">
    <property type="term" value="C:chloroplast thylakoid membrane"/>
    <property type="evidence" value="ECO:0007669"/>
    <property type="project" value="UniProtKB-SubCell"/>
</dbReference>
<dbReference type="GO" id="GO:0009522">
    <property type="term" value="C:photosystem I"/>
    <property type="evidence" value="ECO:0007669"/>
    <property type="project" value="InterPro"/>
</dbReference>
<dbReference type="GO" id="GO:0015979">
    <property type="term" value="P:photosynthesis"/>
    <property type="evidence" value="ECO:0007669"/>
    <property type="project" value="UniProtKB-UniRule"/>
</dbReference>
<dbReference type="HAMAP" id="MF_00437">
    <property type="entry name" value="Ycf4"/>
    <property type="match status" value="1"/>
</dbReference>
<dbReference type="InterPro" id="IPR003359">
    <property type="entry name" value="PSI_Ycf4_assembly"/>
</dbReference>
<dbReference type="PANTHER" id="PTHR33288">
    <property type="match status" value="1"/>
</dbReference>
<dbReference type="PANTHER" id="PTHR33288:SF4">
    <property type="entry name" value="PHOTOSYSTEM I ASSEMBLY PROTEIN YCF4"/>
    <property type="match status" value="1"/>
</dbReference>
<dbReference type="Pfam" id="PF02392">
    <property type="entry name" value="Ycf4"/>
    <property type="match status" value="1"/>
</dbReference>
<reference key="1">
    <citation type="journal article" date="2005" name="Mol. Biol. Evol.">
        <title>Analysis of Acorus calamus chloroplast genome and its phylogenetic implications.</title>
        <authorList>
            <person name="Goremykin V.V."/>
            <person name="Holland B."/>
            <person name="Hirsch-Ernst K.I."/>
            <person name="Hellwig F.H."/>
        </authorList>
    </citation>
    <scope>NUCLEOTIDE SEQUENCE [LARGE SCALE GENOMIC DNA]</scope>
</reference>
<gene>
    <name evidence="1" type="primary">ycf4</name>
</gene>
<proteinExistence type="inferred from homology"/>
<organism>
    <name type="scientific">Acorus calamus</name>
    <name type="common">Sweet flag</name>
    <dbReference type="NCBI Taxonomy" id="4465"/>
    <lineage>
        <taxon>Eukaryota</taxon>
        <taxon>Viridiplantae</taxon>
        <taxon>Streptophyta</taxon>
        <taxon>Embryophyta</taxon>
        <taxon>Tracheophyta</taxon>
        <taxon>Spermatophyta</taxon>
        <taxon>Magnoliopsida</taxon>
        <taxon>Liliopsida</taxon>
        <taxon>Acoraceae</taxon>
        <taxon>Acorus</taxon>
    </lineage>
</organism>
<protein>
    <recommendedName>
        <fullName evidence="1">Photosystem I assembly protein Ycf4</fullName>
    </recommendedName>
</protein>
<evidence type="ECO:0000255" key="1">
    <source>
        <dbReference type="HAMAP-Rule" id="MF_00437"/>
    </source>
</evidence>
<name>YCF4_ACOCL</name>
<geneLocation type="chloroplast"/>
<accession>Q3V524</accession>
<comment type="function">
    <text evidence="1">Seems to be required for the assembly of the photosystem I complex.</text>
</comment>
<comment type="subcellular location">
    <subcellularLocation>
        <location evidence="1">Plastid</location>
        <location evidence="1">Chloroplast thylakoid membrane</location>
        <topology evidence="1">Multi-pass membrane protein</topology>
    </subcellularLocation>
</comment>
<comment type="similarity">
    <text evidence="1">Belongs to the Ycf4 family.</text>
</comment>
<keyword id="KW-0150">Chloroplast</keyword>
<keyword id="KW-0472">Membrane</keyword>
<keyword id="KW-0602">Photosynthesis</keyword>
<keyword id="KW-0934">Plastid</keyword>
<keyword id="KW-0793">Thylakoid</keyword>
<keyword id="KW-0812">Transmembrane</keyword>
<keyword id="KW-1133">Transmembrane helix</keyword>